<proteinExistence type="evidence at transcript level"/>
<reference key="1">
    <citation type="journal article" date="2019" name="J. Microbiol. Biotechnol.">
        <title>A gene cluster for the biosynthesis of dibenzodioxocinons in the endophyte Pestalotiopsis microspora, a taxol producer.</title>
        <authorList>
            <person name="Liu Y."/>
            <person name="Chen L."/>
            <person name="Xie Q."/>
            <person name="Yu X."/>
            <person name="Duan A."/>
            <person name="Lin Y."/>
            <person name="Xiang B."/>
            <person name="Hao X."/>
            <person name="Chen W."/>
            <person name="Zhu X."/>
        </authorList>
    </citation>
    <scope>NUCLEOTIDE SEQUENCE [MRNA]</scope>
    <scope>FUNCTION</scope>
    <scope>PATHWAY</scope>
    <source>
        <strain>NK17</strain>
    </source>
</reference>
<reference key="2">
    <citation type="journal article" date="2022" name="Microbiol. Res.">
        <title>Acquiring novel chemicals by overexpression of a transcription factor DibT in the dibenzodioxocinone biosynthetic cluster in Pestalotiopsis microspora.</title>
        <authorList>
            <person name="Liu Y."/>
            <person name="Fu Y."/>
            <person name="Zhou M."/>
            <person name="Hao X."/>
            <person name="Zhang P."/>
            <person name="Zhu X."/>
        </authorList>
    </citation>
    <scope>INDUCTION</scope>
</reference>
<sequence>MAFMPPTPPKSLLGRHRLLAPSASVRVSPLCLGGMSIGNAWQGGMGECTKEMAFELLDTFYDLGGNFIDTANTYQGGESEQWIGEWMAKNNRRSEMVVSTKYTMSPKTGHPIQQSNFGGTGSKSLHLSIHNSLKALQTDYVDVLYVHCWDYATEIPELMHSLNVLINQGKVLYLGISDAPAWIVTKANMYARQNGLRPFSLYQGRYSAQERDLEREIIPMCQEEGMALQPFGVLGSGLFKSPDKPDTGARRMPPPMLIGREESLSKVLDAVAKRHNVPITSVALAYVLQKAPNVFPVLGGRKPEHLKANIEALSLELTAEDVQEIEKGYDFDIGFPHKFLGFGGMIRGPQDINILTMMGHFDYVAPKKAIRPHQGELTAPQGPA</sequence>
<gene>
    <name evidence="5" type="ORF">GME11368</name>
</gene>
<organism>
    <name type="scientific">Pestalotiopsis microspora</name>
    <dbReference type="NCBI Taxonomy" id="85828"/>
    <lineage>
        <taxon>Eukaryota</taxon>
        <taxon>Fungi</taxon>
        <taxon>Dikarya</taxon>
        <taxon>Ascomycota</taxon>
        <taxon>Pezizomycotina</taxon>
        <taxon>Sordariomycetes</taxon>
        <taxon>Xylariomycetidae</taxon>
        <taxon>Amphisphaeriales</taxon>
        <taxon>Sporocadaceae</taxon>
        <taxon>Pestalotiopsis</taxon>
    </lineage>
</organism>
<comment type="function">
    <text evidence="3 7">Aryl-alcohol dehydrogenase; part of the gene cluster that mediates the biosynthesis of dibenzodioxocinones such as pestalotiollide B, a novel class of inhibitors against cholesterol ester transfer protein (CEPT) (PubMed:31474098). The biosynthesis initiates from condensation of acetate and malonate units catalyzed by the non-reducing PKS pks8/GME11356. Pks8/GME11356 lacks a thioesterase (TE) domain, which is important to the cyclizing of the third ring of atrochrysone carboxylic acid, and the esterase GME11355 might play the role of TE and catalyzes the cyclization reaction of the C ring. The lactamase-like protein GME11357 (or other beta-lactamases in Pestalotiopsis microspora) probably hydrolyzes the thioester bond between the ACP of pks8/GME11356 and the intermediate to release atrochrysone carboxylic acid, which is spontaneously dehydrates to form endocrocin anthrone. Endocrocin anthrone is further converted to emodin via the endocrocin intermediate. Emodin is then oxidized by several enzymes such as the Baeyer-Villiger oxidase GME11358, the oxidoreductase GME11367, the short chain dehydrogenase/reductase GME11373, as well as by other oxidoreductases from the cluster, to modify the A and C rings and open the B ring, and finally yield monodictyphenone. The prenyltransferase GME11375 may catalyze the addition reaction between the C5 side chains and the carbon bone of dibenzodioxocinones. The remaining biochemical reactions to the final product dibenzodioxocinones should be methylation catalyzed by methyltransferase GME11366 and reduction and lactonization reaction catalyzed by a series of oxidordeuctases (Probable).</text>
</comment>
<comment type="pathway">
    <text evidence="7">Secondary metabolite biosynthesis.</text>
</comment>
<comment type="induction">
    <text evidence="4">The expression of the dibenzodioxocinones biosynthesis cluster is positively regulated by the transcription factor dibT.</text>
</comment>
<comment type="similarity">
    <text evidence="6">Belongs to the aldo/keto reductase family. Aldo/keto reductase 2 subfamily.</text>
</comment>
<keyword id="KW-0521">NADP</keyword>
<keyword id="KW-0560">Oxidoreductase</keyword>
<dbReference type="EC" id="1.1.1.-" evidence="7"/>
<dbReference type="EMBL" id="MK590987">
    <property type="protein sequence ID" value="QED41499.1"/>
    <property type="molecule type" value="mRNA"/>
</dbReference>
<dbReference type="SMR" id="A0A5B8YXI2"/>
<dbReference type="GO" id="GO:0016491">
    <property type="term" value="F:oxidoreductase activity"/>
    <property type="evidence" value="ECO:0007669"/>
    <property type="project" value="UniProtKB-KW"/>
</dbReference>
<dbReference type="Gene3D" id="3.20.20.100">
    <property type="entry name" value="NADP-dependent oxidoreductase domain"/>
    <property type="match status" value="1"/>
</dbReference>
<dbReference type="InterPro" id="IPR050523">
    <property type="entry name" value="AKR_Detox_Biosynth"/>
</dbReference>
<dbReference type="InterPro" id="IPR023210">
    <property type="entry name" value="NADP_OxRdtase_dom"/>
</dbReference>
<dbReference type="InterPro" id="IPR036812">
    <property type="entry name" value="NADP_OxRdtase_dom_sf"/>
</dbReference>
<dbReference type="PANTHER" id="PTHR43364">
    <property type="entry name" value="NADH-SPECIFIC METHYLGLYOXAL REDUCTASE-RELATED"/>
    <property type="match status" value="1"/>
</dbReference>
<dbReference type="PANTHER" id="PTHR43364:SF7">
    <property type="entry name" value="NADP-DEPENDENT OXIDOREDUCTASE DOMAIN-CONTAINING PROTEIN-RELATED"/>
    <property type="match status" value="1"/>
</dbReference>
<dbReference type="Pfam" id="PF00248">
    <property type="entry name" value="Aldo_ket_red"/>
    <property type="match status" value="1"/>
</dbReference>
<dbReference type="SUPFAM" id="SSF51430">
    <property type="entry name" value="NAD(P)-linked oxidoreductase"/>
    <property type="match status" value="1"/>
</dbReference>
<evidence type="ECO:0000250" key="1">
    <source>
        <dbReference type="UniProtKB" id="O43488"/>
    </source>
</evidence>
<evidence type="ECO:0000250" key="2">
    <source>
        <dbReference type="UniProtKB" id="Q8CG76"/>
    </source>
</evidence>
<evidence type="ECO:0000269" key="3">
    <source>
    </source>
</evidence>
<evidence type="ECO:0000269" key="4">
    <source>
    </source>
</evidence>
<evidence type="ECO:0000303" key="5">
    <source>
    </source>
</evidence>
<evidence type="ECO:0000305" key="6"/>
<evidence type="ECO:0000305" key="7">
    <source>
    </source>
</evidence>
<name>GME68_PESMI</name>
<protein>
    <recommendedName>
        <fullName evidence="5">Aryl-alcohol dehydrogenase GME11368</fullName>
        <ecNumber evidence="7">1.1.1.-</ecNumber>
    </recommendedName>
    <alternativeName>
        <fullName evidence="5">Dibenzodioxocinones biosynthesis cluster protein GME11368</fullName>
    </alternativeName>
</protein>
<accession>A0A5B8YXI2</accession>
<feature type="chain" id="PRO_0000456746" description="Aryl-alcohol dehydrogenase GME11368">
    <location>
        <begin position="1"/>
        <end position="384"/>
    </location>
</feature>
<feature type="active site" description="Proton donor" evidence="2">
    <location>
        <position position="74"/>
    </location>
</feature>
<feature type="binding site" evidence="1">
    <location>
        <position position="69"/>
    </location>
    <ligand>
        <name>NADP(+)</name>
        <dbReference type="ChEBI" id="CHEBI:58349"/>
    </ligand>
</feature>
<feature type="binding site" evidence="1">
    <location>
        <begin position="177"/>
        <end position="178"/>
    </location>
    <ligand>
        <name>NADP(+)</name>
        <dbReference type="ChEBI" id="CHEBI:58349"/>
    </ligand>
</feature>
<feature type="binding site" evidence="1">
    <location>
        <position position="203"/>
    </location>
    <ligand>
        <name>NADP(+)</name>
        <dbReference type="ChEBI" id="CHEBI:58349"/>
    </ligand>
</feature>
<feature type="binding site" evidence="1">
    <location>
        <begin position="301"/>
        <end position="309"/>
    </location>
    <ligand>
        <name>NADP(+)</name>
        <dbReference type="ChEBI" id="CHEBI:58349"/>
    </ligand>
</feature>